<evidence type="ECO:0000255" key="1">
    <source>
        <dbReference type="HAMAP-Rule" id="MF_00352"/>
    </source>
</evidence>
<accession>A2C100</accession>
<name>CHLN_PROM1</name>
<gene>
    <name evidence="1" type="primary">chlN</name>
    <name type="ordered locus">NATL1_05981</name>
</gene>
<sequence length="419" mass="45899">MSGATLLKESGPKEVFCGLTSIVWLHRRMPDAFFLVVGSRTCAHLIQSAAGVMIFAEPRFGTAILEERDLAGLADAHDELNRVVKNLLARRPEIKTLFLVGSCPSEVIKIDLSRVAENLNIELKGQVTVLNYSGSGIETTFTQGEDGALKALIPLMPKSDQKKLLLVGTLANAVEDRLVSIFNRLGIDNVESFPPRQSTELPSIGPETKVLLTQPYLTDTARELKNKGAEIIEAPFPLGVTGSTLWIQAAANSFGIDKSIVDSILNPLISRAKKALEPHVEKLSGKKLFLLPESQLEIPLARFLSNECGMEIVEIGTPYLNRDLMKAEIDLLPPDCRIVEGQHVEKQLDRVRDSSPDLVVCGMGLANPLEAEGISTKWSIEMVFSPIHGIDQASDLAELFSRPLRRHDILNPTKTLTSN</sequence>
<comment type="function">
    <text evidence="1">Component of the dark-operative protochlorophyllide reductase (DPOR) that uses Mg-ATP and reduced ferredoxin to reduce ring D of protochlorophyllide (Pchlide) to form chlorophyllide a (Chlide). This reaction is light-independent. The NB-protein (ChlN-ChlB) is the catalytic component of the complex.</text>
</comment>
<comment type="catalytic activity">
    <reaction evidence="1">
        <text>chlorophyllide a + oxidized 2[4Fe-4S]-[ferredoxin] + 2 ADP + 2 phosphate = protochlorophyllide a + reduced 2[4Fe-4S]-[ferredoxin] + 2 ATP + 2 H2O</text>
        <dbReference type="Rhea" id="RHEA:28202"/>
        <dbReference type="Rhea" id="RHEA-COMP:10002"/>
        <dbReference type="Rhea" id="RHEA-COMP:10004"/>
        <dbReference type="ChEBI" id="CHEBI:15377"/>
        <dbReference type="ChEBI" id="CHEBI:30616"/>
        <dbReference type="ChEBI" id="CHEBI:33722"/>
        <dbReference type="ChEBI" id="CHEBI:33723"/>
        <dbReference type="ChEBI" id="CHEBI:43474"/>
        <dbReference type="ChEBI" id="CHEBI:83348"/>
        <dbReference type="ChEBI" id="CHEBI:83350"/>
        <dbReference type="ChEBI" id="CHEBI:456216"/>
        <dbReference type="EC" id="1.3.7.7"/>
    </reaction>
</comment>
<comment type="cofactor">
    <cofactor evidence="1">
        <name>[4Fe-4S] cluster</name>
        <dbReference type="ChEBI" id="CHEBI:49883"/>
    </cofactor>
    <text evidence="1">Binds 1 [4Fe-4S] cluster per heterodimer. The cluster is bound at the heterodimer interface by residues from both subunits.</text>
</comment>
<comment type="pathway">
    <text evidence="1">Porphyrin-containing compound metabolism; chlorophyll biosynthesis (light-independent).</text>
</comment>
<comment type="subunit">
    <text evidence="1">Protochlorophyllide reductase is composed of three subunits; ChlL, ChlN and ChlB. Forms a heterotetramer of two ChlB and two ChlN subunits.</text>
</comment>
<comment type="similarity">
    <text evidence="1">Belongs to the BchN/ChlN family.</text>
</comment>
<organism>
    <name type="scientific">Prochlorococcus marinus (strain NATL1A)</name>
    <dbReference type="NCBI Taxonomy" id="167555"/>
    <lineage>
        <taxon>Bacteria</taxon>
        <taxon>Bacillati</taxon>
        <taxon>Cyanobacteriota</taxon>
        <taxon>Cyanophyceae</taxon>
        <taxon>Synechococcales</taxon>
        <taxon>Prochlorococcaceae</taxon>
        <taxon>Prochlorococcus</taxon>
    </lineage>
</organism>
<keyword id="KW-0004">4Fe-4S</keyword>
<keyword id="KW-0067">ATP-binding</keyword>
<keyword id="KW-0149">Chlorophyll biosynthesis</keyword>
<keyword id="KW-0408">Iron</keyword>
<keyword id="KW-0411">Iron-sulfur</keyword>
<keyword id="KW-0479">Metal-binding</keyword>
<keyword id="KW-0547">Nucleotide-binding</keyword>
<keyword id="KW-0560">Oxidoreductase</keyword>
<keyword id="KW-0602">Photosynthesis</keyword>
<feature type="chain" id="PRO_0000324016" description="Light-independent protochlorophyllide reductase subunit N">
    <location>
        <begin position="1"/>
        <end position="419"/>
    </location>
</feature>
<feature type="binding site" evidence="1">
    <location>
        <position position="17"/>
    </location>
    <ligand>
        <name>[4Fe-4S] cluster</name>
        <dbReference type="ChEBI" id="CHEBI:49883"/>
        <note>ligand shared with heterodimeric partner</note>
    </ligand>
</feature>
<feature type="binding site" evidence="1">
    <location>
        <position position="42"/>
    </location>
    <ligand>
        <name>[4Fe-4S] cluster</name>
        <dbReference type="ChEBI" id="CHEBI:49883"/>
        <note>ligand shared with heterodimeric partner</note>
    </ligand>
</feature>
<feature type="binding site" evidence="1">
    <location>
        <position position="103"/>
    </location>
    <ligand>
        <name>[4Fe-4S] cluster</name>
        <dbReference type="ChEBI" id="CHEBI:49883"/>
        <note>ligand shared with heterodimeric partner</note>
    </ligand>
</feature>
<reference key="1">
    <citation type="journal article" date="2007" name="PLoS Genet.">
        <title>Patterns and implications of gene gain and loss in the evolution of Prochlorococcus.</title>
        <authorList>
            <person name="Kettler G.C."/>
            <person name="Martiny A.C."/>
            <person name="Huang K."/>
            <person name="Zucker J."/>
            <person name="Coleman M.L."/>
            <person name="Rodrigue S."/>
            <person name="Chen F."/>
            <person name="Lapidus A."/>
            <person name="Ferriera S."/>
            <person name="Johnson J."/>
            <person name="Steglich C."/>
            <person name="Church G.M."/>
            <person name="Richardson P."/>
            <person name="Chisholm S.W."/>
        </authorList>
    </citation>
    <scope>NUCLEOTIDE SEQUENCE [LARGE SCALE GENOMIC DNA]</scope>
    <source>
        <strain>NATL1A</strain>
    </source>
</reference>
<protein>
    <recommendedName>
        <fullName evidence="1">Light-independent protochlorophyllide reductase subunit N</fullName>
        <shortName evidence="1">DPOR subunit N</shortName>
        <shortName evidence="1">LI-POR subunit N</shortName>
        <ecNumber evidence="1">1.3.7.7</ecNumber>
    </recommendedName>
</protein>
<dbReference type="EC" id="1.3.7.7" evidence="1"/>
<dbReference type="EMBL" id="CP000553">
    <property type="protein sequence ID" value="ABM75160.1"/>
    <property type="molecule type" value="Genomic_DNA"/>
</dbReference>
<dbReference type="RefSeq" id="WP_011823333.1">
    <property type="nucleotide sequence ID" value="NC_008819.1"/>
</dbReference>
<dbReference type="SMR" id="A2C100"/>
<dbReference type="KEGG" id="pme:NATL1_05981"/>
<dbReference type="eggNOG" id="COG2710">
    <property type="taxonomic scope" value="Bacteria"/>
</dbReference>
<dbReference type="HOGENOM" id="CLU_037170_0_0_3"/>
<dbReference type="UniPathway" id="UPA00670"/>
<dbReference type="Proteomes" id="UP000002592">
    <property type="component" value="Chromosome"/>
</dbReference>
<dbReference type="GO" id="GO:0051539">
    <property type="term" value="F:4 iron, 4 sulfur cluster binding"/>
    <property type="evidence" value="ECO:0007669"/>
    <property type="project" value="UniProtKB-UniRule"/>
</dbReference>
<dbReference type="GO" id="GO:0005524">
    <property type="term" value="F:ATP binding"/>
    <property type="evidence" value="ECO:0007669"/>
    <property type="project" value="UniProtKB-UniRule"/>
</dbReference>
<dbReference type="GO" id="GO:0046872">
    <property type="term" value="F:metal ion binding"/>
    <property type="evidence" value="ECO:0007669"/>
    <property type="project" value="UniProtKB-KW"/>
</dbReference>
<dbReference type="GO" id="GO:0016730">
    <property type="term" value="F:oxidoreductase activity, acting on iron-sulfur proteins as donors"/>
    <property type="evidence" value="ECO:0007669"/>
    <property type="project" value="InterPro"/>
</dbReference>
<dbReference type="GO" id="GO:0016636">
    <property type="term" value="F:oxidoreductase activity, acting on the CH-CH group of donors, iron-sulfur protein as acceptor"/>
    <property type="evidence" value="ECO:0007669"/>
    <property type="project" value="UniProtKB-UniRule"/>
</dbReference>
<dbReference type="GO" id="GO:0036068">
    <property type="term" value="P:light-independent chlorophyll biosynthetic process"/>
    <property type="evidence" value="ECO:0007669"/>
    <property type="project" value="UniProtKB-UniRule"/>
</dbReference>
<dbReference type="GO" id="GO:0019685">
    <property type="term" value="P:photosynthesis, dark reaction"/>
    <property type="evidence" value="ECO:0007669"/>
    <property type="project" value="InterPro"/>
</dbReference>
<dbReference type="Gene3D" id="3.40.50.1980">
    <property type="entry name" value="Nitrogenase molybdenum iron protein domain"/>
    <property type="match status" value="3"/>
</dbReference>
<dbReference type="HAMAP" id="MF_00352">
    <property type="entry name" value="ChlN_BchN"/>
    <property type="match status" value="1"/>
</dbReference>
<dbReference type="InterPro" id="IPR050293">
    <property type="entry name" value="LIPOR_BchN/ChlN"/>
</dbReference>
<dbReference type="InterPro" id="IPR000510">
    <property type="entry name" value="Nase/OxRdtase_comp1"/>
</dbReference>
<dbReference type="InterPro" id="IPR005970">
    <property type="entry name" value="Protochl_reductN"/>
</dbReference>
<dbReference type="NCBIfam" id="TIGR01279">
    <property type="entry name" value="DPOR_bchN"/>
    <property type="match status" value="1"/>
</dbReference>
<dbReference type="NCBIfam" id="NF002768">
    <property type="entry name" value="PRK02842.1"/>
    <property type="match status" value="1"/>
</dbReference>
<dbReference type="PANTHER" id="PTHR39429">
    <property type="entry name" value="LIGHT-INDEPENDENT PROTOCHLOROPHYLLIDE REDUCTASE SUBUNIT N"/>
    <property type="match status" value="1"/>
</dbReference>
<dbReference type="PANTHER" id="PTHR39429:SF3">
    <property type="entry name" value="LIGHT-INDEPENDENT PROTOCHLOROPHYLLIDE REDUCTASE SUBUNIT N"/>
    <property type="match status" value="1"/>
</dbReference>
<dbReference type="Pfam" id="PF00148">
    <property type="entry name" value="Oxidored_nitro"/>
    <property type="match status" value="1"/>
</dbReference>
<dbReference type="PIRSF" id="PIRSF000162">
    <property type="entry name" value="P_chlorophyll_rd"/>
    <property type="match status" value="1"/>
</dbReference>
<dbReference type="SUPFAM" id="SSF53807">
    <property type="entry name" value="Helical backbone' metal receptor"/>
    <property type="match status" value="1"/>
</dbReference>
<proteinExistence type="inferred from homology"/>